<gene>
    <name type="primary">traI</name>
    <name type="ordered locus">ECOK12F104</name>
</gene>
<organism>
    <name type="scientific">Escherichia coli (strain K12)</name>
    <dbReference type="NCBI Taxonomy" id="83333"/>
    <lineage>
        <taxon>Bacteria</taxon>
        <taxon>Pseudomonadati</taxon>
        <taxon>Pseudomonadota</taxon>
        <taxon>Gammaproteobacteria</taxon>
        <taxon>Enterobacterales</taxon>
        <taxon>Enterobacteriaceae</taxon>
        <taxon>Escherichia</taxon>
    </lineage>
</organism>
<name>TRAI1_ECOLI</name>
<reference key="1">
    <citation type="journal article" date="1990" name="J. Bacteriol.">
        <title>Nucleotide sequence of the traI (helicase I) gene from the sex factor F.</title>
        <authorList>
            <person name="Bradshaw H.D. Jr."/>
            <person name="Traxler B.A."/>
            <person name="Minkley E.G. Jr."/>
            <person name="Nester E.W."/>
            <person name="Gordon M.P."/>
        </authorList>
    </citation>
    <scope>NUCLEOTIDE SEQUENCE [GENOMIC DNA]</scope>
    <scope>PARTIAL PROTEIN SEQUENCE</scope>
    <source>
        <plasmid>F</plasmid>
    </source>
</reference>
<reference key="2">
    <citation type="journal article" date="1994" name="Microbiol. Rev.">
        <title>Analysis of the sequence and gene products of the transfer region of the F sex factor.</title>
        <authorList>
            <person name="Frost L.S."/>
            <person name="Ippen-Ihler K."/>
            <person name="Skurray R.A."/>
        </authorList>
    </citation>
    <scope>NUCLEOTIDE SEQUENCE [GENOMIC DNA]</scope>
    <source>
        <plasmid>F</plasmid>
    </source>
</reference>
<reference key="3">
    <citation type="submission" date="2000-04" db="EMBL/GenBank/DDBJ databases">
        <title>Complete nucleotide sequence of the F plasmid: its implications for organization and diversification of plasmid genomes.</title>
        <authorList>
            <person name="Shimizu H."/>
            <person name="Saitoh Y."/>
            <person name="Suda Y."/>
            <person name="Uehara K."/>
            <person name="Sampei G."/>
            <person name="Mizobuchi K."/>
        </authorList>
    </citation>
    <scope>NUCLEOTIDE SEQUENCE [LARGE SCALE GENOMIC DNA]</scope>
    <source>
        <strain>K12 / CR63</strain>
        <plasmid>F</plasmid>
    </source>
</reference>
<reference key="4">
    <citation type="journal article" date="1989" name="Gene">
        <title>Nucleotide sequence of the traD region in the Escherichia coli F sex factor.</title>
        <authorList>
            <person name="Jalajakumari M.B."/>
            <person name="Manning P.A."/>
        </authorList>
    </citation>
    <scope>NUCLEOTIDE SEQUENCE [GENOMIC DNA] OF 1-150</scope>
    <source>
        <strain>K12</strain>
        <plasmid>F</plasmid>
    </source>
</reference>
<reference key="5">
    <citation type="journal article" date="1990" name="J. Mol. Biol.">
        <title>Nucleotide sequence of the promoter-distal region of the tra operon of plasmid R100, including traI (DNA helicase I) and traD genes.</title>
        <authorList>
            <person name="Yoshioka Y."/>
            <person name="Fujita Y."/>
            <person name="Ohtsubo E."/>
        </authorList>
    </citation>
    <scope>NUCLEOTIDE SEQUENCE [GENOMIC DNA] OF 1-72</scope>
    <source>
        <plasmid>F</plasmid>
    </source>
</reference>
<reference key="6">
    <citation type="journal article" date="2003" name="Biochim. Biophys. Acta">
        <title>Subdomain organization and catalytic residues of the F factor TraI relaxase domain.</title>
        <authorList>
            <person name="Street L.M."/>
            <person name="Harley M.J."/>
            <person name="Stern J.C."/>
            <person name="Larkin C."/>
            <person name="Williams S.L."/>
            <person name="Miller D.L."/>
            <person name="Dohm J.A."/>
            <person name="Rodgers M.E."/>
            <person name="Schildbach J.F."/>
        </authorList>
    </citation>
    <scope>PROTEIN SEQUENCE OF 1-5</scope>
    <scope>FUNCTION IN SS-DNA DIGESTION</scope>
    <scope>SUBUNIT</scope>
    <scope>CHARACTERIZATION OF RELAXASE CATALYTIC RESIDUES</scope>
    <scope>MUTAGENESIS OF TYR-16; TYR-17; TYR-23 AND TYR-24</scope>
    <source>
        <plasmid>F</plasmid>
    </source>
</reference>
<reference key="7">
    <citation type="journal article" date="1996" name="Mol. Microbiol.">
        <title>Regulation of the expression of the traM gene of the F sex factor of Escherichia coli.</title>
        <authorList>
            <person name="Penfold S.S."/>
            <person name="Simon J."/>
            <person name="Frost L.S."/>
        </authorList>
    </citation>
    <scope>NUCLEOTIDE SEQUENCE [GENOMIC DNA] OF 955-1756</scope>
    <source>
        <plasmid>F</plasmid>
    </source>
</reference>
<reference key="8">
    <citation type="journal article" date="1983" name="Proc. Natl. Acad. Sci. U.S.A.">
        <title>Identification of Escherichia coli DNA helicase I as the traI gene product of the F sex factor.</title>
        <authorList>
            <person name="Abdel-Monem M."/>
            <person name="Taucher-Scholz G."/>
            <person name="Klinkert M.Q."/>
        </authorList>
    </citation>
    <scope>FUNCTION AS DNA HELICASE I</scope>
    <source>
        <plasmid>F</plasmid>
    </source>
</reference>
<reference key="9">
    <citation type="journal article" date="1993" name="J. Bacteriol.">
        <title>Characterization of the reaction product of the oriT nicking reaction catalyzed by Escherichia coli DNA helicase I.</title>
        <authorList>
            <person name="Matson S.W."/>
            <person name="Nelson W.C."/>
            <person name="Morton B.S."/>
        </authorList>
    </citation>
    <scope>FUNCTION IN COVALENT BINDING TO SS-DNA</scope>
    <source>
        <plasmid>F</plasmid>
    </source>
</reference>
<reference key="10">
    <citation type="journal article" date="1995" name="J. Biol. Chem.">
        <title>The traY gene product and integration host factor stimulate Escherichia coli DNA helicase I-catalyzed nicking at the F plasmid oriT.</title>
        <authorList>
            <person name="Nelson W.C."/>
            <person name="Howard M.T."/>
            <person name="Sherman J.A."/>
            <person name="Matson S.W."/>
        </authorList>
    </citation>
    <scope>FUNCTION IN F PLASMID NICKING</scope>
    <source>
        <plasmid>F</plasmid>
    </source>
</reference>
<reference key="11">
    <citation type="journal article" date="1995" name="J. Biol. Chem.">
        <title>Stepwise assembly of a relaxosome at the F plasmid origin of transfer.</title>
        <authorList>
            <person name="Howard M.T."/>
            <person name="Nelson W.C."/>
            <person name="Matson S.W."/>
        </authorList>
    </citation>
    <scope>CHARACTERIZATION OF RELAXOSOME ASSEMBLY ORDER</scope>
    <source>
        <plasmid>F</plasmid>
    </source>
</reference>
<reference key="12">
    <citation type="journal article" date="2001" name="Biochemistry">
        <title>DNA recognition by F factor TraI36: highly sequence-specific binding of single-stranded DNA.</title>
        <authorList>
            <person name="Stern J.C."/>
            <person name="Schildbach J.F."/>
        </authorList>
    </citation>
    <scope>FUNCTION IN SS-DNA-BINDING</scope>
    <scope>CHARACTERIZATION OF DNA SEQUENCE SPECIFICITY</scope>
    <scope>MUTAGENESIS OF TYR-16</scope>
    <source>
        <plasmid>F</plasmid>
    </source>
</reference>
<reference key="13">
    <citation type="journal article" date="2001" name="J. Biol. Chem.">
        <title>F plasmid conjugative DNA transfer: the TraI helicase activity is essential for DNA strand transfer.</title>
        <authorList>
            <person name="Matson S.W."/>
            <person name="Sampson J.K."/>
            <person name="Byrd D.R."/>
        </authorList>
    </citation>
    <scope>DOMAINS</scope>
    <scope>DISRUPTION PHENOTYPE</scope>
    <scope>MUTAGENESIS OF LYS-998</scope>
    <source>
        <plasmid>F</plasmid>
    </source>
</reference>
<reference key="14">
    <citation type="journal article" date="2005" name="J. Bacteriol.">
        <title>The F-plasmid TraI protein contains three functional domains required for conjugative DNA strand transfer.</title>
        <authorList>
            <person name="Matson S.W."/>
            <person name="Ragonese H."/>
        </authorList>
    </citation>
    <scope>CHARACTERIZATION OF THE C-TERMINUS</scope>
    <scope>DOMAINS</scope>
    <scope>MUTAGENESIS OF LYS-998</scope>
    <source>
        <plasmid>F</plasmid>
    </source>
</reference>
<reference key="15">
    <citation type="journal article" date="2006" name="J. Biol. Chem.">
        <title>DNA unwinding by Escherichia coli DNA helicase I (TraI) provides evidence for a processive monomeric molecular motor.</title>
        <authorList>
            <person name="Sikora B."/>
            <person name="Eoff R.L."/>
            <person name="Matson S.W."/>
            <person name="Raney K.D."/>
        </authorList>
    </citation>
    <scope>CHARACTERIZATION OF HELICASE ACTIVITY</scope>
    <scope>SUBUNIT</scope>
    <source>
        <plasmid>F</plasmid>
    </source>
</reference>
<reference key="16">
    <citation type="journal article" date="2007" name="Mol. Microbiol.">
        <title>The F plasmid-encoded TraM protein stimulates relaxosome-mediated cleavage at oriT through an interaction with TraI.</title>
        <authorList>
            <person name="Ragonese H."/>
            <person name="Haisch D."/>
            <person name="Villareal E."/>
            <person name="Choi J.H."/>
            <person name="Matson S.W."/>
        </authorList>
    </citation>
    <scope>INTERACTION WITH TRAM; TRAY AND IHF</scope>
    <scope>SUBUNIT</scope>
    <source>
        <plasmid>F</plasmid>
    </source>
</reference>
<reference key="17">
    <citation type="journal article" date="2003" name="Structure">
        <title>Structural insights into single-stranded DNA binding and cleavage by F factor TraI.</title>
        <authorList>
            <person name="Datta S."/>
            <person name="Larkin C."/>
            <person name="Schildbach J.F."/>
        </authorList>
    </citation>
    <scope>X-RAY CRYSTALLOGRAPHY (2.6 ANGSTROMS) OF 1-330 IN COMPLEX WITH MAGNESIUM</scope>
    <source>
        <plasmid>F</plasmid>
    </source>
</reference>
<reference key="18">
    <citation type="journal article" date="2005" name="Structure">
        <title>Inter- and intramolecular determinants of the specificity of single-stranded DNA binding and cleavage by the F factor relaxase.</title>
        <authorList>
            <person name="Larkin C."/>
            <person name="Datta S."/>
            <person name="Harley M.J."/>
            <person name="Anderson B.J."/>
            <person name="Ebie A."/>
            <person name="Hargreaves V."/>
            <person name="Schildbach J.F."/>
        </authorList>
    </citation>
    <scope>X-RAY CRYSTALLOGRAPHY (2.72 ANGSTROMS) OF 1-330 BOUND TO SS-DNA AND MAGNESIUM</scope>
    <scope>CHARACTERIZATION OF RELAXASE CATALYTIC RESIDUE</scope>
    <scope>MUTAGENESIS OF MET-1; SER-3; TYR-16; LYS-88; ARG-237 AND ILE-241</scope>
    <source>
        <plasmid>F</plasmid>
    </source>
</reference>
<reference key="19">
    <citation type="journal article" date="2007" name="Proc. Natl. Acad. Sci. U.S.A.">
        <title>Disrupting antibiotic resistance propagation by inhibiting the conjugative DNA relaxase.</title>
        <authorList>
            <person name="Lujan S.A."/>
            <person name="Guogas L.M."/>
            <person name="Ragonese H."/>
            <person name="Matson S.W."/>
            <person name="Redinbo M.R."/>
        </authorList>
    </citation>
    <scope>X-RAY CRYSTALLOGRAPHY (2.42 ANGSTROMS) OF 1-300 IN COMPLEX WITH SS-DNA WITH AND WITHOUT INHIBITOR</scope>
    <scope>ACTIVITY REGULATION</scope>
    <scope>MUTAGENESIS OF HIS-159</scope>
    <source>
        <plasmid>F</plasmid>
    </source>
</reference>
<reference key="20">
    <citation type="journal article" date="2009" name="J. Mol. Biol.">
        <title>A novel fold in the TraI relaxase-helicase c-terminal domain is essential for conjugative DNA transfer.</title>
        <authorList>
            <person name="Guogas L.M."/>
            <person name="Kennedy S.A."/>
            <person name="Lee J.H."/>
            <person name="Redinbo M.R."/>
        </authorList>
    </citation>
    <scope>X-RAY CRYSTALLOGRAPHY (2.4 ANGSTROMS) OF 1476-1628</scope>
    <scope>DNA-BINDING BY C-TERMINUS</scope>
    <scope>MUTAGENESIS OF 1517-ALA--GLY-1525; 1574-LEU-GLN-1575; VAL-1603 AND 1721-GLU--ASP-1756</scope>
    <scope>DISRUPTION PHENOTYPE</scope>
    <source>
        <plasmid>F</plasmid>
    </source>
</reference>
<comment type="function">
    <text>Conjugative DNA transfer (CDT) is the unidirectional transfer of ssDNA plasmid from a donor to a recipient cell. It is the central mechanism by which antibiotic resistance and virulence factors are propagated in bacterial populations. Part of the relaxosome, which facilitates a site- and strand-specific cut in the origin of transfer by TraI, at the nic site. Relaxosome formation requires binding of IHF and TraY to the oriT region, which then facilitates binding of TraI relaxase. TraI forms a covalent 5'-phosphotyrosine intermediate linkage to the ssDNA. The transesterified T-strand moves from the donor cell to the recipient cell in a 5'to 3' direction, with the DNA helicase activity of TraI unwinding the DNA. DNA transfer occurs via the conjugative pore (transferosome) an intercellular junction mediated by a type IV secretion system, with TraD providing the means to link the relaxosome to the conjugative pore. The relaxase completes DNA transfer by reversing the covalent phosphotyrosine linkage and releasing the T-strand.</text>
</comment>
<comment type="function">
    <text>TraI has also been identified as DNA helicase I. DNA. helicase I is a potent, highly processive DNA-dependent ATPase, able to unwind about 1.1 kb dsDNA per second in a 5' to 3' manner.</text>
</comment>
<comment type="catalytic activity">
    <reaction>
        <text>ATP-independent breakage of single-stranded DNA, followed by passage and rejoining.</text>
        <dbReference type="EC" id="5.6.2.1"/>
    </reaction>
</comment>
<comment type="catalytic activity">
    <reaction>
        <text>ATP + H2O = ADP + phosphate + H(+)</text>
        <dbReference type="Rhea" id="RHEA:13065"/>
        <dbReference type="ChEBI" id="CHEBI:15377"/>
        <dbReference type="ChEBI" id="CHEBI:15378"/>
        <dbReference type="ChEBI" id="CHEBI:30616"/>
        <dbReference type="ChEBI" id="CHEBI:43474"/>
        <dbReference type="ChEBI" id="CHEBI:456216"/>
        <dbReference type="EC" id="3.6.4.12"/>
    </reaction>
</comment>
<comment type="cofactor">
    <cofactor>
        <name>Mg(2+)</name>
        <dbReference type="ChEBI" id="CHEBI:18420"/>
    </cofactor>
</comment>
<comment type="activity regulation">
    <text evidence="10">Nicking activity (relaxase) is inhibited by bisphosphonates such as the non-competitive inhibitor imidobisphosphate (PNP), etidronic acid (ETIDRO) and clodronic acid (CLODRO). The latter 2 are competitive inhibitors, and are already used clinically to treat bone loss (marketed as Didronel and Bonefos). All 3 compounds also inhibit conjugation and kill F plasmid-containing cells. They are specific to dual tyrosine relaxases such as those found in F and related R conjugative plasmids.</text>
</comment>
<comment type="subunit">
    <text evidence="4 5 8 9 10">Monomer. Part of the relaxosome, a complex composed of plasmid-encodes TraI, TraM, TraY and host-encoded IHF bound to the F plasmid origin of transfer (oriT). Directly contacts coupling protein TraD. Seems to directly contact TraM via its C-terminus.</text>
</comment>
<comment type="subcellular location">
    <subcellularLocation>
        <location evidence="12">Cytoplasm</location>
    </subcellularLocation>
</comment>
<comment type="alternative products">
    <event type="alternative initiation"/>
    <isoform>
        <id>P14565-1</id>
        <name>traI</name>
        <sequence type="displayed"/>
    </isoform>
    <isoform>
        <id>P14565-2</id>
        <name>traI*</name>
        <sequence type="described" ref="VSP_018971"/>
    </isoform>
</comment>
<comment type="domain">
    <text evidence="2 6">Has 4 domains; the relaxase domain (residues 1-330), an unknown domain (residues 330-990), the helicase domain (residues 990-1450) and the C-terminal domain (1450-1756) which is required for conjugative DNA transfer, possibly via interaction with TraM.</text>
</comment>
<comment type="disruption phenotype">
    <text evidence="2 11">Loss of conjugative DNA transfer.</text>
</comment>
<comment type="similarity">
    <text evidence="12">To TraI of plasmid IncFII R100.</text>
</comment>
<comment type="sequence caution" evidence="12">
    <conflict type="erroneous initiation">
        <sequence resource="EMBL-CDS" id="AAA83930"/>
    </conflict>
    <text>Truncated N-terminus.</text>
</comment>
<feature type="chain" id="PRO_0000024504" description="Multifunctional conjugation protein TraI">
    <location>
        <begin position="1"/>
        <end position="1756"/>
    </location>
</feature>
<feature type="region of interest" description="DNA relaxase">
    <location>
        <begin position="1"/>
        <end position="330"/>
    </location>
</feature>
<feature type="region of interest" description="DNA helicase I">
    <location>
        <begin position="950"/>
        <end position="1500"/>
    </location>
</feature>
<feature type="region of interest" description="Required for DNA transfer, may interact with TraM">
    <location>
        <begin position="1534"/>
        <end position="1756"/>
    </location>
</feature>
<feature type="coiled-coil region" evidence="1">
    <location>
        <begin position="1717"/>
        <end position="1753"/>
    </location>
</feature>
<feature type="active site" description="O-(5'-phospho-DNA)-tyrosine intermediate; for relaxase activity" evidence="12">
    <location>
        <position position="16"/>
    </location>
</feature>
<feature type="active site" description="Relaxase" evidence="1">
    <location>
        <position position="17"/>
    </location>
</feature>
<feature type="binding site" evidence="5">
    <location>
        <position position="146"/>
    </location>
    <ligand>
        <name>Mg(2+)</name>
        <dbReference type="ChEBI" id="CHEBI:18420"/>
        <note>catalytic</note>
    </ligand>
</feature>
<feature type="binding site" evidence="5">
    <location>
        <position position="157"/>
    </location>
    <ligand>
        <name>Mg(2+)</name>
        <dbReference type="ChEBI" id="CHEBI:18420"/>
        <note>catalytic</note>
    </ligand>
</feature>
<feature type="binding site" evidence="5">
    <location>
        <position position="159"/>
    </location>
    <ligand>
        <name>Mg(2+)</name>
        <dbReference type="ChEBI" id="CHEBI:18420"/>
        <note>catalytic</note>
    </ligand>
</feature>
<feature type="binding site" evidence="1">
    <location>
        <begin position="992"/>
        <end position="999"/>
    </location>
    <ligand>
        <name>ATP</name>
        <dbReference type="ChEBI" id="CHEBI:30616"/>
    </ligand>
</feature>
<feature type="splice variant" id="VSP_018971" description="In isoform traI*." evidence="12">
    <location>
        <begin position="1"/>
        <end position="954"/>
    </location>
</feature>
<feature type="mutagenesis site" description="Loss of ssDNA binding." evidence="7">
    <location>
        <position position="1"/>
    </location>
</feature>
<feature type="mutagenesis site" description="1000-fold reduced affinity for ssDNA." evidence="7">
    <original>S</original>
    <variation>A</variation>
    <location>
        <position position="3"/>
    </location>
</feature>
<feature type="mutagenesis site" description="Loss of DNA nicking ability; still binds ssDNA." evidence="3 4 7">
    <original>Y</original>
    <variation>F</variation>
    <location>
        <position position="16"/>
    </location>
</feature>
<feature type="mutagenesis site" description="Loss of DNA nicking ability; still binds ssDNA." evidence="4">
    <original>Y</original>
    <variation>F</variation>
    <location>
        <position position="17"/>
    </location>
</feature>
<feature type="mutagenesis site" description="Reduced DNA nicking ability." evidence="4">
    <original>Y</original>
    <variation>F</variation>
    <location>
        <position position="23"/>
    </location>
</feature>
<feature type="mutagenesis site" description="Reduced DNA nicking ability." evidence="4">
    <original>Y</original>
    <variation>F</variation>
    <location>
        <position position="24"/>
    </location>
</feature>
<feature type="mutagenesis site" description="10000-fold reduced affinity for ssDNA." evidence="7">
    <original>K</original>
    <variation>A</variation>
    <location>
        <position position="88"/>
    </location>
</feature>
<feature type="mutagenesis site" description="Loss of oriT cleavage." evidence="10">
    <original>H</original>
    <variation>E</variation>
    <location>
        <position position="159"/>
    </location>
</feature>
<feature type="mutagenesis site" description="300-fold reduced affinity for ssDNA." evidence="7">
    <original>R</original>
    <variation>A</variation>
    <location>
        <position position="237"/>
    </location>
</feature>
<feature type="mutagenesis site" description="1500-fold reduced affinity for ssDNA." evidence="7">
    <original>I</original>
    <variation>A</variation>
    <location>
        <position position="241"/>
    </location>
</feature>
<feature type="mutagenesis site" description="No helicase activity, nicks DNA, loss of DNA transfer activity." evidence="2 6">
    <original>K</original>
    <variation>M</variation>
    <location>
        <position position="998"/>
    </location>
</feature>
<feature type="mutagenesis site" description="10,000-fold reduction in conjugative DNA transfer." evidence="11">
    <location>
        <begin position="1517"/>
        <end position="1525"/>
    </location>
</feature>
<feature type="mutagenesis site" description="100,000-fold reduction in conjugative DNA transfer.">
    <original>PGRKYPQP</original>
    <variation>GGRKYGQG</variation>
    <location>
        <begin position="1518"/>
        <end position="1525"/>
    </location>
</feature>
<feature type="mutagenesis site" description="200-fold reduction in conjugative DNA transfer; when associated with A-1603." evidence="11">
    <original>LQ</original>
    <variation>AA</variation>
    <location>
        <begin position="1574"/>
        <end position="1575"/>
    </location>
</feature>
<feature type="mutagenesis site" description="200-fold reduction in conjugative DNA transfer; when associated with 1574-A-A-1575." evidence="11">
    <original>V</original>
    <variation>A</variation>
    <location>
        <position position="1603"/>
    </location>
</feature>
<feature type="mutagenesis site" description="More than 100-fold reduction in conjugative DNA transfer." evidence="11">
    <location>
        <begin position="1721"/>
        <end position="1756"/>
    </location>
</feature>
<feature type="sequence conflict" description="In Ref. 4; AAA83930." evidence="12" ref="4">
    <original>MQDGSN</original>
    <variation>CRMAVT</variation>
    <location>
        <begin position="69"/>
        <end position="74"/>
    </location>
</feature>
<feature type="strand" evidence="15">
    <location>
        <begin position="2"/>
        <end position="6"/>
    </location>
</feature>
<feature type="helix" evidence="15">
    <location>
        <begin position="10"/>
        <end position="17"/>
    </location>
</feature>
<feature type="helix" evidence="15">
    <location>
        <begin position="20"/>
        <end position="22"/>
    </location>
</feature>
<feature type="turn" evidence="15">
    <location>
        <begin position="24"/>
        <end position="26"/>
    </location>
</feature>
<feature type="strand" evidence="15">
    <location>
        <begin position="32"/>
        <end position="35"/>
    </location>
</feature>
<feature type="helix" evidence="15">
    <location>
        <begin position="36"/>
        <end position="41"/>
    </location>
</feature>
<feature type="helix" evidence="15">
    <location>
        <begin position="49"/>
        <end position="56"/>
    </location>
</feature>
<feature type="strand" evidence="13">
    <location>
        <begin position="61"/>
        <end position="63"/>
    </location>
</feature>
<feature type="turn" evidence="13">
    <location>
        <begin position="71"/>
        <end position="73"/>
    </location>
</feature>
<feature type="strand" evidence="15">
    <location>
        <begin position="79"/>
        <end position="85"/>
    </location>
</feature>
<feature type="helix" evidence="15">
    <location>
        <begin position="88"/>
        <end position="95"/>
    </location>
</feature>
<feature type="helix" evidence="15">
    <location>
        <begin position="101"/>
        <end position="118"/>
    </location>
</feature>
<feature type="strand" evidence="15">
    <location>
        <begin position="122"/>
        <end position="124"/>
    </location>
</feature>
<feature type="strand" evidence="15">
    <location>
        <begin position="133"/>
        <end position="135"/>
    </location>
</feature>
<feature type="strand" evidence="15">
    <location>
        <begin position="141"/>
        <end position="148"/>
    </location>
</feature>
<feature type="strand" evidence="15">
    <location>
        <begin position="154"/>
        <end position="164"/>
    </location>
</feature>
<feature type="strand" evidence="15">
    <location>
        <begin position="166"/>
        <end position="168"/>
    </location>
</feature>
<feature type="strand" evidence="15">
    <location>
        <begin position="171"/>
        <end position="173"/>
    </location>
</feature>
<feature type="turn" evidence="15">
    <location>
        <begin position="179"/>
        <end position="181"/>
    </location>
</feature>
<feature type="helix" evidence="15">
    <location>
        <begin position="185"/>
        <end position="190"/>
    </location>
</feature>
<feature type="helix" evidence="15">
    <location>
        <begin position="193"/>
        <end position="210"/>
    </location>
</feature>
<feature type="helix" evidence="15">
    <location>
        <begin position="220"/>
        <end position="222"/>
    </location>
</feature>
<feature type="helix" evidence="15">
    <location>
        <begin position="231"/>
        <end position="234"/>
    </location>
</feature>
<feature type="helix" evidence="13">
    <location>
        <begin position="236"/>
        <end position="244"/>
    </location>
</feature>
<feature type="helix" evidence="13">
    <location>
        <begin position="251"/>
        <end position="260"/>
    </location>
</feature>
<feature type="helix" evidence="15">
    <location>
        <begin position="270"/>
        <end position="282"/>
    </location>
</feature>
<feature type="turn" evidence="15">
    <location>
        <begin position="283"/>
        <end position="285"/>
    </location>
</feature>
<feature type="helix" evidence="15">
    <location>
        <begin position="288"/>
        <end position="296"/>
    </location>
</feature>
<feature type="helix" evidence="14">
    <location>
        <begin position="390"/>
        <end position="403"/>
    </location>
</feature>
<feature type="helix" evidence="14">
    <location>
        <begin position="409"/>
        <end position="411"/>
    </location>
</feature>
<feature type="helix" evidence="14">
    <location>
        <begin position="417"/>
        <end position="429"/>
    </location>
</feature>
<feature type="helix" evidence="14">
    <location>
        <begin position="443"/>
        <end position="458"/>
    </location>
</feature>
<feature type="strand" evidence="14">
    <location>
        <begin position="463"/>
        <end position="466"/>
    </location>
</feature>
<feature type="helix" evidence="14">
    <location>
        <begin position="471"/>
        <end position="476"/>
    </location>
</feature>
<feature type="turn" evidence="14">
    <location>
        <begin position="479"/>
        <end position="481"/>
    </location>
</feature>
<feature type="strand" evidence="14">
    <location>
        <begin position="486"/>
        <end position="488"/>
    </location>
</feature>
<feature type="turn" evidence="14">
    <location>
        <begin position="489"/>
        <end position="495"/>
    </location>
</feature>
<feature type="strand" evidence="14">
    <location>
        <begin position="504"/>
        <end position="512"/>
    </location>
</feature>
<feature type="helix" evidence="14">
    <location>
        <begin position="513"/>
        <end position="527"/>
    </location>
</feature>
<feature type="strand" evidence="14">
    <location>
        <begin position="532"/>
        <end position="538"/>
    </location>
</feature>
<feature type="turn" evidence="14">
    <location>
        <begin position="539"/>
        <end position="541"/>
    </location>
</feature>
<feature type="helix" evidence="14">
    <location>
        <begin position="544"/>
        <end position="552"/>
    </location>
</feature>
<feature type="helix" evidence="16">
    <location>
        <begin position="1477"/>
        <end position="1487"/>
    </location>
</feature>
<feature type="helix" evidence="16">
    <location>
        <begin position="1491"/>
        <end position="1493"/>
    </location>
</feature>
<feature type="helix" evidence="16">
    <location>
        <begin position="1495"/>
        <end position="1504"/>
    </location>
</feature>
<feature type="strand" evidence="16">
    <location>
        <begin position="1514"/>
        <end position="1516"/>
    </location>
</feature>
<feature type="strand" evidence="16">
    <location>
        <begin position="1526"/>
        <end position="1532"/>
    </location>
</feature>
<feature type="strand" evidence="16">
    <location>
        <begin position="1538"/>
        <end position="1545"/>
    </location>
</feature>
<feature type="strand" evidence="16">
    <location>
        <begin position="1547"/>
        <end position="1549"/>
    </location>
</feature>
<feature type="turn" evidence="16">
    <location>
        <begin position="1550"/>
        <end position="1552"/>
    </location>
</feature>
<feature type="strand" evidence="16">
    <location>
        <begin position="1553"/>
        <end position="1555"/>
    </location>
</feature>
<feature type="strand" evidence="16">
    <location>
        <begin position="1562"/>
        <end position="1565"/>
    </location>
</feature>
<feature type="strand" evidence="16">
    <location>
        <begin position="1571"/>
        <end position="1576"/>
    </location>
</feature>
<feature type="strand" evidence="16">
    <location>
        <begin position="1578"/>
        <end position="1587"/>
    </location>
</feature>
<feature type="helix" evidence="16">
    <location>
        <begin position="1588"/>
        <end position="1597"/>
    </location>
</feature>
<feature type="strand" evidence="16">
    <location>
        <begin position="1601"/>
        <end position="1608"/>
    </location>
</feature>
<feature type="helix" evidence="16">
    <location>
        <begin position="1616"/>
        <end position="1618"/>
    </location>
</feature>
<keyword id="KW-0002">3D-structure</keyword>
<keyword id="KW-0024">Alternative initiation</keyword>
<keyword id="KW-0067">ATP-binding</keyword>
<keyword id="KW-0175">Coiled coil</keyword>
<keyword id="KW-0184">Conjugation</keyword>
<keyword id="KW-0963">Cytoplasm</keyword>
<keyword id="KW-0903">Direct protein sequencing</keyword>
<keyword id="KW-0238">DNA-binding</keyword>
<keyword id="KW-0347">Helicase</keyword>
<keyword id="KW-0378">Hydrolase</keyword>
<keyword id="KW-0413">Isomerase</keyword>
<keyword id="KW-0460">Magnesium</keyword>
<keyword id="KW-0479">Metal-binding</keyword>
<keyword id="KW-0499">Mobility protein</keyword>
<keyword id="KW-0511">Multifunctional enzyme</keyword>
<keyword id="KW-0547">Nucleotide-binding</keyword>
<keyword id="KW-0614">Plasmid</keyword>
<dbReference type="EC" id="5.6.2.1"/>
<dbReference type="EC" id="3.6.4.12"/>
<dbReference type="EMBL" id="M54796">
    <property type="protein sequence ID" value="AAA98085.1"/>
    <property type="molecule type" value="Genomic_DNA"/>
</dbReference>
<dbReference type="EMBL" id="M54796">
    <property type="protein sequence ID" value="AAA98086.1"/>
    <property type="molecule type" value="Genomic_DNA"/>
</dbReference>
<dbReference type="EMBL" id="U01159">
    <property type="protein sequence ID" value="AAC44186.1"/>
    <property type="molecule type" value="Genomic_DNA"/>
</dbReference>
<dbReference type="EMBL" id="AP001918">
    <property type="protein sequence ID" value="BAA97974.1"/>
    <property type="molecule type" value="Genomic_DNA"/>
</dbReference>
<dbReference type="EMBL" id="M29254">
    <property type="protein sequence ID" value="AAA83930.1"/>
    <property type="status" value="ALT_INIT"/>
    <property type="molecule type" value="Genomic_DNA"/>
</dbReference>
<dbReference type="EMBL" id="X57430">
    <property type="protein sequence ID" value="CAA40677.1"/>
    <property type="molecule type" value="Genomic_DNA"/>
</dbReference>
<dbReference type="EMBL" id="U01159">
    <property type="protein sequence ID" value="AAC44187.1"/>
    <property type="molecule type" value="Genomic_DNA"/>
</dbReference>
<dbReference type="RefSeq" id="NP_061483.1">
    <property type="nucleotide sequence ID" value="NC_002483.1"/>
</dbReference>
<dbReference type="RefSeq" id="WP_000987005.1">
    <molecule id="P14565-1"/>
    <property type="nucleotide sequence ID" value="NC_002483.1"/>
</dbReference>
<dbReference type="PDB" id="1P4D">
    <property type="method" value="X-ray"/>
    <property type="resolution" value="2.60 A"/>
    <property type="chains" value="A/B/C=1-330"/>
</dbReference>
<dbReference type="PDB" id="2A0I">
    <property type="method" value="X-ray"/>
    <property type="resolution" value="2.72 A"/>
    <property type="chains" value="A=1-330"/>
</dbReference>
<dbReference type="PDB" id="2L8B">
    <property type="method" value="NMR"/>
    <property type="chains" value="A=381-569"/>
</dbReference>
<dbReference type="PDB" id="2Q7T">
    <property type="method" value="X-ray"/>
    <property type="resolution" value="2.42 A"/>
    <property type="chains" value="A/B=1-300"/>
</dbReference>
<dbReference type="PDB" id="2Q7U">
    <property type="method" value="X-ray"/>
    <property type="resolution" value="3.00 A"/>
    <property type="chains" value="A/B=1-300"/>
</dbReference>
<dbReference type="PDB" id="3FLD">
    <property type="method" value="X-ray"/>
    <property type="resolution" value="2.40 A"/>
    <property type="chains" value="A/B=1476-1628"/>
</dbReference>
<dbReference type="PDB" id="5N8O">
    <property type="method" value="EM"/>
    <property type="resolution" value="3.90 A"/>
    <property type="chains" value="A=1-1756"/>
</dbReference>
<dbReference type="PDBsum" id="1P4D"/>
<dbReference type="PDBsum" id="2A0I"/>
<dbReference type="PDBsum" id="2L8B"/>
<dbReference type="PDBsum" id="2Q7T"/>
<dbReference type="PDBsum" id="2Q7U"/>
<dbReference type="PDBsum" id="3FLD"/>
<dbReference type="PDBsum" id="5N8O"/>
<dbReference type="SMR" id="P14565"/>
<dbReference type="KEGG" id="ecoc:C3026_24625"/>
<dbReference type="PATRIC" id="fig|83333.107.peg.607"/>
<dbReference type="OrthoDB" id="1634048at2"/>
<dbReference type="EvolutionaryTrace" id="P14565"/>
<dbReference type="PRO" id="PR:P14565"/>
<dbReference type="GO" id="GO:0005737">
    <property type="term" value="C:cytoplasm"/>
    <property type="evidence" value="ECO:0007669"/>
    <property type="project" value="UniProtKB-SubCell"/>
</dbReference>
<dbReference type="GO" id="GO:0005524">
    <property type="term" value="F:ATP binding"/>
    <property type="evidence" value="ECO:0007669"/>
    <property type="project" value="UniProtKB-KW"/>
</dbReference>
<dbReference type="GO" id="GO:0016887">
    <property type="term" value="F:ATP hydrolysis activity"/>
    <property type="evidence" value="ECO:0007669"/>
    <property type="project" value="RHEA"/>
</dbReference>
<dbReference type="GO" id="GO:0003677">
    <property type="term" value="F:DNA binding"/>
    <property type="evidence" value="ECO:0007669"/>
    <property type="project" value="UniProtKB-KW"/>
</dbReference>
<dbReference type="GO" id="GO:0003678">
    <property type="term" value="F:DNA helicase activity"/>
    <property type="evidence" value="ECO:0007669"/>
    <property type="project" value="InterPro"/>
</dbReference>
<dbReference type="GO" id="GO:0003917">
    <property type="term" value="F:DNA topoisomerase type I (single strand cut, ATP-independent) activity"/>
    <property type="evidence" value="ECO:0007669"/>
    <property type="project" value="UniProtKB-EC"/>
</dbReference>
<dbReference type="GO" id="GO:0046872">
    <property type="term" value="F:metal ion binding"/>
    <property type="evidence" value="ECO:0007669"/>
    <property type="project" value="UniProtKB-KW"/>
</dbReference>
<dbReference type="CDD" id="cd17933">
    <property type="entry name" value="DEXSc_RecD-like"/>
    <property type="match status" value="1"/>
</dbReference>
<dbReference type="CDD" id="cd18809">
    <property type="entry name" value="SF1_C_RecD"/>
    <property type="match status" value="1"/>
</dbReference>
<dbReference type="Gene3D" id="6.10.140.290">
    <property type="match status" value="1"/>
</dbReference>
<dbReference type="Gene3D" id="6.10.250.110">
    <property type="match status" value="1"/>
</dbReference>
<dbReference type="Gene3D" id="3.40.50.300">
    <property type="entry name" value="P-loop containing nucleotide triphosphate hydrolases"/>
    <property type="match status" value="1"/>
</dbReference>
<dbReference type="InterPro" id="IPR014129">
    <property type="entry name" value="Conjug_relaxase_TraI"/>
</dbReference>
<dbReference type="InterPro" id="IPR009767">
    <property type="entry name" value="DNA_helicase_TraI_C"/>
</dbReference>
<dbReference type="InterPro" id="IPR027417">
    <property type="entry name" value="P-loop_NTPase"/>
</dbReference>
<dbReference type="InterPro" id="IPR014059">
    <property type="entry name" value="TraI/TrwC_relax"/>
</dbReference>
<dbReference type="InterPro" id="IPR040668">
    <property type="entry name" value="TraI_2B"/>
</dbReference>
<dbReference type="InterPro" id="IPR054558">
    <property type="entry name" value="TraI_hel_assoc_DBD_N"/>
</dbReference>
<dbReference type="InterPro" id="IPR040987">
    <property type="entry name" value="TraI_N"/>
</dbReference>
<dbReference type="InterPro" id="IPR014862">
    <property type="entry name" value="TrwC"/>
</dbReference>
<dbReference type="NCBIfam" id="NF041492">
    <property type="entry name" value="MobF"/>
    <property type="match status" value="1"/>
</dbReference>
<dbReference type="NCBIfam" id="NF010263">
    <property type="entry name" value="PRK13709.1"/>
    <property type="match status" value="1"/>
</dbReference>
<dbReference type="NCBIfam" id="NF011300">
    <property type="entry name" value="PRK14712.1"/>
    <property type="match status" value="1"/>
</dbReference>
<dbReference type="NCBIfam" id="TIGR02686">
    <property type="entry name" value="relax_trwC"/>
    <property type="match status" value="1"/>
</dbReference>
<dbReference type="NCBIfam" id="TIGR02760">
    <property type="entry name" value="TraI_TIGR"/>
    <property type="match status" value="1"/>
</dbReference>
<dbReference type="Pfam" id="PF13604">
    <property type="entry name" value="AAA_30"/>
    <property type="match status" value="1"/>
</dbReference>
<dbReference type="Pfam" id="PF18272">
    <property type="entry name" value="ssDNA_TraI_N"/>
    <property type="match status" value="1"/>
</dbReference>
<dbReference type="Pfam" id="PF18340">
    <property type="entry name" value="TraI_2B"/>
    <property type="match status" value="1"/>
</dbReference>
<dbReference type="Pfam" id="PF07057">
    <property type="entry name" value="TraI_C"/>
    <property type="match status" value="1"/>
</dbReference>
<dbReference type="Pfam" id="PF22232">
    <property type="entry name" value="TraI_hel_assoc_N"/>
    <property type="match status" value="1"/>
</dbReference>
<dbReference type="Pfam" id="PF08751">
    <property type="entry name" value="TrwC"/>
    <property type="match status" value="1"/>
</dbReference>
<dbReference type="SUPFAM" id="SSF55464">
    <property type="entry name" value="Origin of replication-binding domain, RBD-like"/>
    <property type="match status" value="1"/>
</dbReference>
<dbReference type="SUPFAM" id="SSF52540">
    <property type="entry name" value="P-loop containing nucleoside triphosphate hydrolases"/>
    <property type="match status" value="2"/>
</dbReference>
<sequence length="1756" mass="192016">MMSIAQVRSAGSAGNYYTDKDNYYVLGSMGERWAGRGAEQLGLQGSVDKDVFTRLLEGRLPDGADLSRMQDGSNRHRPGYDLTFSAPKSVSMMAMLGGDKRLIDAHNQAVDFAVRQVEALASTRVMTDGQSETVLTGNLVMALFNHDTSRDQEPQLHTHAVVANVTQHNGEWKTLSSDKVGKTGFIENVYANQIAFGRLYREKLKEQVEALGYETEVVGKHGMWEMPGVPVEAFSGRSQTIREAVGEDASLKSRDVAALDTRKSKQHVDPEIKMAEWMQTLKETGFDIRAYRDAADQRADLRTLTPGPASQDGPDVQQAVTQAIAGLSERKVQFTYTDVLARTVGILPPENGVIERARAGIDEAISREQLIPLDREKGLFTSGIHVLDELSVRALSRDIMKQNRVTVHPEKSVPRTAGYSDAVSVLAQDRPSLAIVSGQGGAAGQRERVAELVMMAREQGREVQIIAADRRSQMNMKQDERLSGELITGRRQLLEGMAFTPGSTVIVDQGEKLSLKETLTLLDGAARHNVQVLITDSGQRTGTGSALMAMKDAGVNTYRWQGGEQRPATIISEPDRNVRYARLAGDFAASVKAGEESVAQVSGVREQAILTQAIRSELKTQGVLGLPEVTMTALSPVWLDSRSRYLRDMYRPGMVMEQWNPETRSHDRYVIDRVTAQSHSLTLRDAQGETQVVRISSLDSSWSLFRPEKMPVADGERLRVTGKIPGLRVSGGDRLQVASVSEDAMTVVVPGRAEPATLPVSDSPFTALKLENGWVETPGHSVSDSATVFASVTQMAMDNATLNGLARSGRDVRLYSSLDETRTAEKLARHPSFTVVSEQIKTRAGETSLETAISHQKSALHTPAQQAIHLALPVVESKKLAFSMVDLLTEAKSFAAEGTGFTELGGEINAQIKRGDLLYVDVAKGYGTGLLVSRASYEAEKSILRHILEGKEAVMPLMERVPGELMEKLTSGQRAATRMILETSDRFTVVQGYAGVGKTTQFRAVMSAVNMLPESERPRVVGLGPTHRAVGEMRSAGVDAQTLASFLHDTQLQQRSGETPDFSNTLFLLDESSMVGNTDMARAYALIAAGGGRAVASGDTDQLQAIAPGQPFRLQQTRSAADVAIMKEIVRQTPELREAVYSLINRDVERALSGLESVKPSQVPRQEGAWAPEHSVTEFSHSQEAKLAEAQQKAMLKGEAFPDVPMTLYEAIVRDYTGRTPEAREQTLIVTHLNEDRRVLNSMIHDVREKAGELGKEQVMVPVLNTANIRDGELRRLSTWETHRDALVLVDNVYHRIAGISKDDGLITLQDAEGNTRLISPREAVAEGVTLYTPDTIRVGTGDRMRFTKSDRERGYVANSVWTVTAVSGDSVTLSDGQQTREIRPGQEQAEQHIDLAYAITAHGAQGASETFAIALEGTEGNRKLMAGFESAYVALSRMKQHVQVYTDNRQGWTDAINNAVQKGTAHDVFEPKPDREVMNAERLFSTARELRDVAAGRAVLRQAGLAGGDSPARFIAPGRKYPQPYVALPAFDRNGKSAGIWLNPLTTDDGNGLRGFSGEGRVKGSGDAQFVALQGSRNGESLLADNMQDGVRIARDNPDSGVVVRIAGEGRPWNPGAITGGRVWGDIPDNSVQPGAGNGEPVTAEVLAQRQAEEAIRRETERRADEIVRKMAENKPDLPDGKTEQAVREIAGQERDRAAITEREAALPEGVLREPQRVREAVREIARENLLQERLQQMERDMVRDLQKEKTLGGD</sequence>
<proteinExistence type="evidence at protein level"/>
<geneLocation type="plasmid">
    <name>F</name>
</geneLocation>
<evidence type="ECO:0000255" key="1"/>
<evidence type="ECO:0000269" key="2">
    <source>
    </source>
</evidence>
<evidence type="ECO:0000269" key="3">
    <source>
    </source>
</evidence>
<evidence type="ECO:0000269" key="4">
    <source>
    </source>
</evidence>
<evidence type="ECO:0000269" key="5">
    <source>
    </source>
</evidence>
<evidence type="ECO:0000269" key="6">
    <source>
    </source>
</evidence>
<evidence type="ECO:0000269" key="7">
    <source>
    </source>
</evidence>
<evidence type="ECO:0000269" key="8">
    <source>
    </source>
</evidence>
<evidence type="ECO:0000269" key="9">
    <source>
    </source>
</evidence>
<evidence type="ECO:0000269" key="10">
    <source>
    </source>
</evidence>
<evidence type="ECO:0000269" key="11">
    <source>
    </source>
</evidence>
<evidence type="ECO:0000305" key="12"/>
<evidence type="ECO:0007829" key="13">
    <source>
        <dbReference type="PDB" id="2A0I"/>
    </source>
</evidence>
<evidence type="ECO:0007829" key="14">
    <source>
        <dbReference type="PDB" id="2L8B"/>
    </source>
</evidence>
<evidence type="ECO:0007829" key="15">
    <source>
        <dbReference type="PDB" id="2Q7T"/>
    </source>
</evidence>
<evidence type="ECO:0007829" key="16">
    <source>
        <dbReference type="PDB" id="3FLD"/>
    </source>
</evidence>
<protein>
    <recommendedName>
        <fullName>Multifunctional conjugation protein TraI</fullName>
    </recommendedName>
    <domain>
        <recommendedName>
            <fullName>DNA relaxase TraI</fullName>
            <ecNumber>5.6.2.1</ecNumber>
        </recommendedName>
        <alternativeName>
            <fullName>DNA nickase TraI</fullName>
        </alternativeName>
        <alternativeName>
            <fullName>Transesterase TraI</fullName>
        </alternativeName>
    </domain>
    <domain>
        <recommendedName>
            <fullName>DNA helicase I</fullName>
            <ecNumber>3.6.4.12</ecNumber>
        </recommendedName>
    </domain>
</protein>
<accession>P14565</accession>
<accession>Q51811</accession>